<evidence type="ECO:0000255" key="1"/>
<evidence type="ECO:0000269" key="2">
    <source>
    </source>
</evidence>
<evidence type="ECO:0000269" key="3">
    <source>
    </source>
</evidence>
<evidence type="ECO:0000303" key="4">
    <source>
    </source>
</evidence>
<evidence type="ECO:0000303" key="5">
    <source>
    </source>
</evidence>
<evidence type="ECO:0000305" key="6"/>
<evidence type="ECO:0000305" key="7">
    <source>
    </source>
</evidence>
<evidence type="ECO:0000305" key="8">
    <source>
    </source>
</evidence>
<evidence type="ECO:0000312" key="9">
    <source>
        <dbReference type="PDB" id="2MVA"/>
    </source>
</evidence>
<evidence type="ECO:0007829" key="10">
    <source>
        <dbReference type="PDB" id="2MVA"/>
    </source>
</evidence>
<reference key="1">
    <citation type="journal article" date="2015" name="Nat. Commun.">
        <title>A pain-inducing centipede toxin targets the heat activation machinery of nociceptor TRPV1.</title>
        <authorList>
            <person name="Yang S."/>
            <person name="Yang F."/>
            <person name="Wei N."/>
            <person name="Hong J."/>
            <person name="Li B."/>
            <person name="Luo L."/>
            <person name="Rong M."/>
            <person name="Yarov-Yarovoy V."/>
            <person name="Zheng J."/>
            <person name="Wang K."/>
            <person name="Lai R."/>
        </authorList>
    </citation>
    <scope>NUCLEOTIDE SEQUENCE [MRNA]</scope>
    <scope>PROTEIN SEQUENCE OF 41-67</scope>
    <scope>FUNCTION</scope>
    <scope>SYNTHESIS OF 41-67</scope>
    <scope>MUTAGENESIS OF ARG-55; ASP-60; LYS-61; GLN-62 AND GLU-67</scope>
    <scope>STRUCTURE BY NMR OF 41-67</scope>
    <scope>DISULFIDE BOND</scope>
    <scope>MASS SPECTROMETRY</scope>
    <scope>SUBCELLULAR LOCATION</scope>
    <scope>BIOASSAY</scope>
    <source>
        <tissue>Venom</tissue>
        <tissue>Venom gland</tissue>
    </source>
</reference>
<reference key="2">
    <citation type="journal article" date="2020" name="Toxicon">
        <title>A centipede toxin causes rapid desensitization of nociceptor TRPV1 ion channel.</title>
        <authorList>
            <person name="Zhu A."/>
            <person name="Aierken A."/>
            <person name="Yao Z."/>
            <person name="Vu S."/>
            <person name="Tian Y."/>
            <person name="Zheng J."/>
            <person name="Yang S."/>
            <person name="Yang F."/>
        </authorList>
    </citation>
    <scope>NUCLEOTIDE SEQUENCE [MRNA]</scope>
    <scope>PROTEIN SEQUENCE OF 37-67</scope>
    <scope>FUNCTION</scope>
    <scope>SYNTHESIS OF 41-67</scope>
    <scope>SYNTHESIS OF 37-67</scope>
    <scope>MASS SPECTROMETRY</scope>
    <scope>DISULFIDE BONDS</scope>
    <scope>3D-STRUCTURE MODELING</scope>
    <scope>SUBCELLULAR LOCATION</scope>
</reference>
<feature type="signal peptide" evidence="1">
    <location>
        <begin position="1"/>
        <end position="25"/>
    </location>
</feature>
<feature type="propeptide" id="PRO_0000442957" evidence="8">
    <location>
        <begin position="26"/>
        <end position="36"/>
    </location>
</feature>
<feature type="peptide" id="PRO_0000448930" description="Tau-scoloptoxin(04)-Ssm1b" evidence="3">
    <location>
        <begin position="37"/>
        <end position="67"/>
    </location>
</feature>
<feature type="peptide" id="PRO_5006011410" description="Tau-scoloptoxin(04)-Ssm1a" evidence="2">
    <location>
        <begin position="41"/>
        <end position="67"/>
    </location>
</feature>
<feature type="region of interest" description="Highly charged C-terminal region, binds to TRPV1 channel" evidence="2">
    <location>
        <begin position="55"/>
        <end position="67"/>
    </location>
</feature>
<feature type="disulfide bond" evidence="2 3 9">
    <location>
        <begin position="45"/>
        <end position="56"/>
    </location>
</feature>
<feature type="disulfide bond" evidence="2 3 9">
    <location>
        <begin position="50"/>
        <end position="63"/>
    </location>
</feature>
<feature type="mutagenesis site" description="2-fold increase in potentiator activity." evidence="2">
    <original>R</original>
    <variation>A</variation>
    <location>
        <position position="55"/>
    </location>
</feature>
<feature type="mutagenesis site" description="15-fold decrease in potentiator activity." evidence="2">
    <original>D</original>
    <variation>A</variation>
    <location>
        <position position="60"/>
    </location>
</feature>
<feature type="mutagenesis site" description="2-fold decrease in potentiator activity." evidence="2">
    <original>K</original>
    <variation>A</variation>
    <location>
        <position position="61"/>
    </location>
</feature>
<feature type="mutagenesis site" description="7-fold decrease in potentiator activity." evidence="2">
    <original>Q</original>
    <variation>A</variation>
    <location>
        <position position="62"/>
    </location>
</feature>
<feature type="mutagenesis site" description="6-fold decrease in potentiator activity." evidence="2">
    <original>E</original>
    <variation>A</variation>
    <location>
        <position position="67"/>
    </location>
</feature>
<feature type="sequence conflict" description="In Ref. 2; AA sequence." evidence="6" ref="2">
    <original>E</original>
    <variation>K</variation>
    <location>
        <position position="39"/>
    </location>
</feature>
<feature type="strand" evidence="10">
    <location>
        <begin position="46"/>
        <end position="48"/>
    </location>
</feature>
<feature type="strand" evidence="10">
    <location>
        <begin position="51"/>
        <end position="54"/>
    </location>
</feature>
<feature type="turn" evidence="10">
    <location>
        <begin position="58"/>
        <end position="60"/>
    </location>
</feature>
<proteinExistence type="evidence at protein level"/>
<keyword id="KW-0002">3D-structure</keyword>
<keyword id="KW-0903">Direct protein sequencing</keyword>
<keyword id="KW-1015">Disulfide bond</keyword>
<keyword id="KW-0872">Ion channel impairing toxin</keyword>
<keyword id="KW-0964">Secreted</keyword>
<keyword id="KW-0732">Signal</keyword>
<keyword id="KW-0800">Toxin</keyword>
<accession>A0A0N7CSQ4</accession>
<accession>A0A0R4I950</accession>
<protein>
    <recommendedName>
        <fullName evidence="6">Tau-scoloptoxin(04)-Ssm1b</fullName>
        <shortName evidence="6">Tau-SLPTX(04)-Ssm1b</shortName>
    </recommendedName>
    <alternativeName>
        <fullName evidence="5">Toxin RhTx2</fullName>
    </alternativeName>
    <component>
        <recommendedName>
            <fullName evidence="6">Tau-scoloptoxin(04)-Ssm1a</fullName>
            <shortName evidence="6">Tau-SLPTX(04)-Ssm1a</shortName>
        </recommendedName>
        <alternativeName>
            <fullName evidence="4">Toxin RhTx</fullName>
        </alternativeName>
    </component>
</protein>
<sequence>MLKSFCILSVFMVLFLAKFPDLCSGEEISPLKIVVRNSEYLNNPCNGVTCPSGYRCSIVDKQCIKKEK</sequence>
<dbReference type="EMBL" id="KM675476">
    <property type="protein sequence ID" value="AKN58847.1"/>
    <property type="molecule type" value="mRNA"/>
</dbReference>
<dbReference type="PDB" id="2MVA">
    <property type="method" value="NMR"/>
    <property type="chains" value="A=41-67"/>
</dbReference>
<dbReference type="PDBsum" id="2MVA"/>
<dbReference type="SMR" id="A0A0N7CSQ4"/>
<dbReference type="EvolutionaryTrace" id="A0A0N7CSQ4"/>
<dbReference type="GO" id="GO:0005576">
    <property type="term" value="C:extracellular region"/>
    <property type="evidence" value="ECO:0007669"/>
    <property type="project" value="UniProtKB-SubCell"/>
</dbReference>
<dbReference type="GO" id="GO:0099106">
    <property type="term" value="F:ion channel regulator activity"/>
    <property type="evidence" value="ECO:0007669"/>
    <property type="project" value="UniProtKB-KW"/>
</dbReference>
<dbReference type="GO" id="GO:0090729">
    <property type="term" value="F:toxin activity"/>
    <property type="evidence" value="ECO:0007669"/>
    <property type="project" value="UniProtKB-KW"/>
</dbReference>
<name>TX41A_SCOMU</name>
<comment type="function">
    <molecule>Tau-scoloptoxin(04)-Ssm1a</molecule>
    <text evidence="2 3">Extremely potent agonist and potentiator of TRPV1 (EC(50)=470-521.5 nM (mouse)) (PubMed:26420335, PubMed:32097697). It strongly promotes the heat activation process by downshifting the activation threshold temperature (PubMed:26420335). It preferably binds to the activated channel and promotes its opening (PubMed:26420335). Holding the channel closed by cooling prevents binding of this toxin, leaving it ineffective (PubMed:26420335). The toxin binds to the charge-rich outer pore region of the channel where it directly interacts with the pore helix and turret, two adjacent structural elements known to be critical for activation gating of TRPV1 (PubMed:26420335). In comparison with Sm1b, induces a TRPV1 desensitization with slower kinetics (20 seconds) (PubMed:32097697). In vivo, induces pain in mice after intraplantar injection (PubMed:26420335).</text>
</comment>
<comment type="function">
    <molecule>Tau-scoloptoxin(04)-Ssm1b</molecule>
    <text evidence="3">Potent agonist and probable potentiator of TRPV1 (EC(50)=38.35 uM (mouse)) (PubMed:32097697). Also binds to the outer pore region of TRPV1 (PubMed:32097697). In comparison with Sm1a, induces a TRPV1 desensitization with faster kinetics (2 seconds) and leads to a more complete TRPV1 desensitization (PubMed:32097697). Desensitization is achieved by reducing both the open probability and the single-channel conductance upon prolonged exposure (PubMed:32097697).</text>
</comment>
<comment type="subcellular location">
    <subcellularLocation>
        <location evidence="2">Secreted</location>
    </subcellularLocation>
</comment>
<comment type="tissue specificity">
    <text evidence="7 8">Expressed by the venom gland.</text>
</comment>
<comment type="domain">
    <molecule>Tau-scoloptoxin(04)-Ssm1a</molecule>
    <text evidence="2">Does not incorporate into the lipid membrane.</text>
</comment>
<comment type="mass spectrometry"/>
<comment type="mass spectrometry"/>
<comment type="miscellaneous">
    <molecule>Tau-scoloptoxin(04)-Ssm1a</molecule>
    <text evidence="2">Negative results: does not act on mNav1.5/SCN5A, mNav1.7/SCN9A, tetrodotoxin-sensitive and -resistant Nav, mKv1.1/KCNA1, mKv2.1/KCNB1, mKv4.1/KCND1, high voltage activated Cav, low voltage activated Cav, TRPV2, TRPV3 and TRPV4.</text>
</comment>
<comment type="miscellaneous">
    <molecule>Tau-scoloptoxin(04)-Ssm1b</molecule>
    <text evidence="3">Negative results: has no or very weak activity on TRPV2 and TRPV3.</text>
</comment>
<comment type="similarity">
    <text evidence="6">Belongs to the scoloptoxin-04 family.</text>
</comment>
<organism>
    <name type="scientific">Scolopendra mutilans</name>
    <name type="common">Chinese red-headed centipede</name>
    <name type="synonym">Scolopendra subspinipes mutilans</name>
    <dbReference type="NCBI Taxonomy" id="2836329"/>
    <lineage>
        <taxon>Eukaryota</taxon>
        <taxon>Metazoa</taxon>
        <taxon>Ecdysozoa</taxon>
        <taxon>Arthropoda</taxon>
        <taxon>Myriapoda</taxon>
        <taxon>Chilopoda</taxon>
        <taxon>Pleurostigmophora</taxon>
        <taxon>Scolopendromorpha</taxon>
        <taxon>Scolopendridae</taxon>
        <taxon>Scolopendra</taxon>
    </lineage>
</organism>